<organism>
    <name type="scientific">Arabidopsis thaliana</name>
    <name type="common">Mouse-ear cress</name>
    <dbReference type="NCBI Taxonomy" id="3702"/>
    <lineage>
        <taxon>Eukaryota</taxon>
        <taxon>Viridiplantae</taxon>
        <taxon>Streptophyta</taxon>
        <taxon>Embryophyta</taxon>
        <taxon>Tracheophyta</taxon>
        <taxon>Spermatophyta</taxon>
        <taxon>Magnoliopsida</taxon>
        <taxon>eudicotyledons</taxon>
        <taxon>Gunneridae</taxon>
        <taxon>Pentapetalae</taxon>
        <taxon>rosids</taxon>
        <taxon>malvids</taxon>
        <taxon>Brassicales</taxon>
        <taxon>Brassicaceae</taxon>
        <taxon>Camelineae</taxon>
        <taxon>Arabidopsis</taxon>
    </lineage>
</organism>
<evidence type="ECO:0000250" key="1"/>
<evidence type="ECO:0000303" key="2">
    <source>
    </source>
</evidence>
<evidence type="ECO:0000305" key="3"/>
<keyword id="KW-0963">Cytoplasm</keyword>
<keyword id="KW-1185">Reference proteome</keyword>
<keyword id="KW-0687">Ribonucleoprotein</keyword>
<keyword id="KW-0689">Ribosomal protein</keyword>
<keyword id="KW-0694">RNA-binding</keyword>
<keyword id="KW-0699">rRNA-binding</keyword>
<gene>
    <name type="primary">RPS11B</name>
    <name type="ordered locus">At4g30800</name>
    <name type="ORF">F6I18.290</name>
</gene>
<name>RS112_ARATH</name>
<reference key="1">
    <citation type="journal article" date="1999" name="Nature">
        <title>Sequence and analysis of chromosome 4 of the plant Arabidopsis thaliana.</title>
        <authorList>
            <person name="Mayer K.F.X."/>
            <person name="Schueller C."/>
            <person name="Wambutt R."/>
            <person name="Murphy G."/>
            <person name="Volckaert G."/>
            <person name="Pohl T."/>
            <person name="Duesterhoeft A."/>
            <person name="Stiekema W."/>
            <person name="Entian K.-D."/>
            <person name="Terryn N."/>
            <person name="Harris B."/>
            <person name="Ansorge W."/>
            <person name="Brandt P."/>
            <person name="Grivell L.A."/>
            <person name="Rieger M."/>
            <person name="Weichselgartner M."/>
            <person name="de Simone V."/>
            <person name="Obermaier B."/>
            <person name="Mache R."/>
            <person name="Mueller M."/>
            <person name="Kreis M."/>
            <person name="Delseny M."/>
            <person name="Puigdomenech P."/>
            <person name="Watson M."/>
            <person name="Schmidtheini T."/>
            <person name="Reichert B."/>
            <person name="Portetelle D."/>
            <person name="Perez-Alonso M."/>
            <person name="Boutry M."/>
            <person name="Bancroft I."/>
            <person name="Vos P."/>
            <person name="Hoheisel J."/>
            <person name="Zimmermann W."/>
            <person name="Wedler H."/>
            <person name="Ridley P."/>
            <person name="Langham S.-A."/>
            <person name="McCullagh B."/>
            <person name="Bilham L."/>
            <person name="Robben J."/>
            <person name="van der Schueren J."/>
            <person name="Grymonprez B."/>
            <person name="Chuang Y.-J."/>
            <person name="Vandenbussche F."/>
            <person name="Braeken M."/>
            <person name="Weltjens I."/>
            <person name="Voet M."/>
            <person name="Bastiaens I."/>
            <person name="Aert R."/>
            <person name="Defoor E."/>
            <person name="Weitzenegger T."/>
            <person name="Bothe G."/>
            <person name="Ramsperger U."/>
            <person name="Hilbert H."/>
            <person name="Braun M."/>
            <person name="Holzer E."/>
            <person name="Brandt A."/>
            <person name="Peters S."/>
            <person name="van Staveren M."/>
            <person name="Dirkse W."/>
            <person name="Mooijman P."/>
            <person name="Klein Lankhorst R."/>
            <person name="Rose M."/>
            <person name="Hauf J."/>
            <person name="Koetter P."/>
            <person name="Berneiser S."/>
            <person name="Hempel S."/>
            <person name="Feldpausch M."/>
            <person name="Lamberth S."/>
            <person name="Van den Daele H."/>
            <person name="De Keyser A."/>
            <person name="Buysshaert C."/>
            <person name="Gielen J."/>
            <person name="Villarroel R."/>
            <person name="De Clercq R."/>
            <person name="van Montagu M."/>
            <person name="Rogers J."/>
            <person name="Cronin A."/>
            <person name="Quail M.A."/>
            <person name="Bray-Allen S."/>
            <person name="Clark L."/>
            <person name="Doggett J."/>
            <person name="Hall S."/>
            <person name="Kay M."/>
            <person name="Lennard N."/>
            <person name="McLay K."/>
            <person name="Mayes R."/>
            <person name="Pettett A."/>
            <person name="Rajandream M.A."/>
            <person name="Lyne M."/>
            <person name="Benes V."/>
            <person name="Rechmann S."/>
            <person name="Borkova D."/>
            <person name="Bloecker H."/>
            <person name="Scharfe M."/>
            <person name="Grimm M."/>
            <person name="Loehnert T.-H."/>
            <person name="Dose S."/>
            <person name="de Haan M."/>
            <person name="Maarse A.C."/>
            <person name="Schaefer M."/>
            <person name="Mueller-Auer S."/>
            <person name="Gabel C."/>
            <person name="Fuchs M."/>
            <person name="Fartmann B."/>
            <person name="Granderath K."/>
            <person name="Dauner D."/>
            <person name="Herzl A."/>
            <person name="Neumann S."/>
            <person name="Argiriou A."/>
            <person name="Vitale D."/>
            <person name="Liguori R."/>
            <person name="Piravandi E."/>
            <person name="Massenet O."/>
            <person name="Quigley F."/>
            <person name="Clabauld G."/>
            <person name="Muendlein A."/>
            <person name="Felber R."/>
            <person name="Schnabl S."/>
            <person name="Hiller R."/>
            <person name="Schmidt W."/>
            <person name="Lecharny A."/>
            <person name="Aubourg S."/>
            <person name="Chefdor F."/>
            <person name="Cooke R."/>
            <person name="Berger C."/>
            <person name="Monfort A."/>
            <person name="Casacuberta E."/>
            <person name="Gibbons T."/>
            <person name="Weber N."/>
            <person name="Vandenbol M."/>
            <person name="Bargues M."/>
            <person name="Terol J."/>
            <person name="Torres A."/>
            <person name="Perez-Perez A."/>
            <person name="Purnelle B."/>
            <person name="Bent E."/>
            <person name="Johnson S."/>
            <person name="Tacon D."/>
            <person name="Jesse T."/>
            <person name="Heijnen L."/>
            <person name="Schwarz S."/>
            <person name="Scholler P."/>
            <person name="Heber S."/>
            <person name="Francs P."/>
            <person name="Bielke C."/>
            <person name="Frishman D."/>
            <person name="Haase D."/>
            <person name="Lemcke K."/>
            <person name="Mewes H.-W."/>
            <person name="Stocker S."/>
            <person name="Zaccaria P."/>
            <person name="Bevan M."/>
            <person name="Wilson R.K."/>
            <person name="de la Bastide M."/>
            <person name="Habermann K."/>
            <person name="Parnell L."/>
            <person name="Dedhia N."/>
            <person name="Gnoj L."/>
            <person name="Schutz K."/>
            <person name="Huang E."/>
            <person name="Spiegel L."/>
            <person name="Sekhon M."/>
            <person name="Murray J."/>
            <person name="Sheet P."/>
            <person name="Cordes M."/>
            <person name="Abu-Threideh J."/>
            <person name="Stoneking T."/>
            <person name="Kalicki J."/>
            <person name="Graves T."/>
            <person name="Harmon G."/>
            <person name="Edwards J."/>
            <person name="Latreille P."/>
            <person name="Courtney L."/>
            <person name="Cloud J."/>
            <person name="Abbott A."/>
            <person name="Scott K."/>
            <person name="Johnson D."/>
            <person name="Minx P."/>
            <person name="Bentley D."/>
            <person name="Fulton B."/>
            <person name="Miller N."/>
            <person name="Greco T."/>
            <person name="Kemp K."/>
            <person name="Kramer J."/>
            <person name="Fulton L."/>
            <person name="Mardis E."/>
            <person name="Dante M."/>
            <person name="Pepin K."/>
            <person name="Hillier L.W."/>
            <person name="Nelson J."/>
            <person name="Spieth J."/>
            <person name="Ryan E."/>
            <person name="Andrews S."/>
            <person name="Geisel C."/>
            <person name="Layman D."/>
            <person name="Du H."/>
            <person name="Ali J."/>
            <person name="Berghoff A."/>
            <person name="Jones K."/>
            <person name="Drone K."/>
            <person name="Cotton M."/>
            <person name="Joshu C."/>
            <person name="Antonoiu B."/>
            <person name="Zidanic M."/>
            <person name="Strong C."/>
            <person name="Sun H."/>
            <person name="Lamar B."/>
            <person name="Yordan C."/>
            <person name="Ma P."/>
            <person name="Zhong J."/>
            <person name="Preston R."/>
            <person name="Vil D."/>
            <person name="Shekher M."/>
            <person name="Matero A."/>
            <person name="Shah R."/>
            <person name="Swaby I.K."/>
            <person name="O'Shaughnessy A."/>
            <person name="Rodriguez M."/>
            <person name="Hoffman J."/>
            <person name="Till S."/>
            <person name="Granat S."/>
            <person name="Shohdy N."/>
            <person name="Hasegawa A."/>
            <person name="Hameed A."/>
            <person name="Lodhi M."/>
            <person name="Johnson A."/>
            <person name="Chen E."/>
            <person name="Marra M.A."/>
            <person name="Martienssen R."/>
            <person name="McCombie W.R."/>
        </authorList>
    </citation>
    <scope>NUCLEOTIDE SEQUENCE [LARGE SCALE GENOMIC DNA]</scope>
    <source>
        <strain>cv. Columbia</strain>
    </source>
</reference>
<reference key="2">
    <citation type="journal article" date="2017" name="Plant J.">
        <title>Araport11: a complete reannotation of the Arabidopsis thaliana reference genome.</title>
        <authorList>
            <person name="Cheng C.Y."/>
            <person name="Krishnakumar V."/>
            <person name="Chan A.P."/>
            <person name="Thibaud-Nissen F."/>
            <person name="Schobel S."/>
            <person name="Town C.D."/>
        </authorList>
    </citation>
    <scope>GENOME REANNOTATION</scope>
    <source>
        <strain>cv. Columbia</strain>
    </source>
</reference>
<reference key="3">
    <citation type="journal article" date="2003" name="Science">
        <title>Empirical analysis of transcriptional activity in the Arabidopsis genome.</title>
        <authorList>
            <person name="Yamada K."/>
            <person name="Lim J."/>
            <person name="Dale J.M."/>
            <person name="Chen H."/>
            <person name="Shinn P."/>
            <person name="Palm C.J."/>
            <person name="Southwick A.M."/>
            <person name="Wu H.C."/>
            <person name="Kim C.J."/>
            <person name="Nguyen M."/>
            <person name="Pham P.K."/>
            <person name="Cheuk R.F."/>
            <person name="Karlin-Newmann G."/>
            <person name="Liu S.X."/>
            <person name="Lam B."/>
            <person name="Sakano H."/>
            <person name="Wu T."/>
            <person name="Yu G."/>
            <person name="Miranda M."/>
            <person name="Quach H.L."/>
            <person name="Tripp M."/>
            <person name="Chang C.H."/>
            <person name="Lee J.M."/>
            <person name="Toriumi M.J."/>
            <person name="Chan M.M."/>
            <person name="Tang C.C."/>
            <person name="Onodera C.S."/>
            <person name="Deng J.M."/>
            <person name="Akiyama K."/>
            <person name="Ansari Y."/>
            <person name="Arakawa T."/>
            <person name="Banh J."/>
            <person name="Banno F."/>
            <person name="Bowser L."/>
            <person name="Brooks S.Y."/>
            <person name="Carninci P."/>
            <person name="Chao Q."/>
            <person name="Choy N."/>
            <person name="Enju A."/>
            <person name="Goldsmith A.D."/>
            <person name="Gurjal M."/>
            <person name="Hansen N.F."/>
            <person name="Hayashizaki Y."/>
            <person name="Johnson-Hopson C."/>
            <person name="Hsuan V.W."/>
            <person name="Iida K."/>
            <person name="Karnes M."/>
            <person name="Khan S."/>
            <person name="Koesema E."/>
            <person name="Ishida J."/>
            <person name="Jiang P.X."/>
            <person name="Jones T."/>
            <person name="Kawai J."/>
            <person name="Kamiya A."/>
            <person name="Meyers C."/>
            <person name="Nakajima M."/>
            <person name="Narusaka M."/>
            <person name="Seki M."/>
            <person name="Sakurai T."/>
            <person name="Satou M."/>
            <person name="Tamse R."/>
            <person name="Vaysberg M."/>
            <person name="Wallender E.K."/>
            <person name="Wong C."/>
            <person name="Yamamura Y."/>
            <person name="Yuan S."/>
            <person name="Shinozaki K."/>
            <person name="Davis R.W."/>
            <person name="Theologis A."/>
            <person name="Ecker J.R."/>
        </authorList>
    </citation>
    <scope>NUCLEOTIDE SEQUENCE [LARGE SCALE MRNA]</scope>
    <source>
        <strain>cv. Columbia</strain>
    </source>
</reference>
<reference key="4">
    <citation type="journal article" date="2001" name="Plant Physiol.">
        <title>The organization of cytoplasmic ribosomal protein genes in the Arabidopsis genome.</title>
        <authorList>
            <person name="Barakat A."/>
            <person name="Szick-Miranda K."/>
            <person name="Chang I.-F."/>
            <person name="Guyot R."/>
            <person name="Blanc G."/>
            <person name="Cooke R."/>
            <person name="Delseny M."/>
            <person name="Bailey-Serres J."/>
        </authorList>
    </citation>
    <scope>GENE FAMILY ORGANIZATION</scope>
    <scope>NOMENCLATURE</scope>
</reference>
<reference key="5">
    <citation type="journal article" date="2023" name="Plant Cell">
        <title>An updated nomenclature for plant ribosomal protein genes.</title>
        <authorList>
            <person name="Scarpin M.R."/>
            <person name="Busche M."/>
            <person name="Martinez R.E."/>
            <person name="Harper L.C."/>
            <person name="Reiser L."/>
            <person name="Szakonyi D."/>
            <person name="Merchante C."/>
            <person name="Lan T."/>
            <person name="Xiong W."/>
            <person name="Mo B."/>
            <person name="Tang G."/>
            <person name="Chen X."/>
            <person name="Bailey-Serres J."/>
            <person name="Browning K.S."/>
            <person name="Brunkard J.O."/>
        </authorList>
    </citation>
    <scope>NOMENCLATURE</scope>
</reference>
<sequence length="159" mass="17931">MAEQTEKAFLKQPKVFLSSKKSGKGKRPGKGGNRFWKNIGLGFKTPREAIEGTYIDQKCPFTGTVSIRGRILSGTCHSAKMQRTIIVRRDYLHFVKKYRRYEKRHSNIPAHVSPCFRVKEGDRVTIGQCRPLSKTVRFNVLKVIPAGSSSIGKKAFTGM</sequence>
<accession>O65569</accession>
<proteinExistence type="evidence at transcript level"/>
<protein>
    <recommendedName>
        <fullName evidence="2">Small ribosomal subunit protein uS17y</fullName>
    </recommendedName>
    <alternativeName>
        <fullName>40S ribosomal protein S11-2</fullName>
    </alternativeName>
</protein>
<comment type="subcellular location">
    <subcellularLocation>
        <location evidence="1">Cytoplasm</location>
    </subcellularLocation>
</comment>
<comment type="similarity">
    <text evidence="3">Belongs to the universal ribosomal protein uS17 family.</text>
</comment>
<feature type="chain" id="PRO_0000128516" description="Small ribosomal subunit protein uS17y">
    <location>
        <begin position="1"/>
        <end position="159"/>
    </location>
</feature>
<dbReference type="EMBL" id="AL022198">
    <property type="protein sequence ID" value="CAA18213.2"/>
    <property type="molecule type" value="Genomic_DNA"/>
</dbReference>
<dbReference type="EMBL" id="AL161577">
    <property type="protein sequence ID" value="CAB79798.1"/>
    <property type="molecule type" value="Genomic_DNA"/>
</dbReference>
<dbReference type="EMBL" id="CP002687">
    <property type="protein sequence ID" value="AEE85810.1"/>
    <property type="molecule type" value="Genomic_DNA"/>
</dbReference>
<dbReference type="EMBL" id="AY046037">
    <property type="protein sequence ID" value="AAK76711.1"/>
    <property type="molecule type" value="mRNA"/>
</dbReference>
<dbReference type="EMBL" id="AY091204">
    <property type="protein sequence ID" value="AAM14143.1"/>
    <property type="molecule type" value="mRNA"/>
</dbReference>
<dbReference type="PIR" id="E85360">
    <property type="entry name" value="E85360"/>
</dbReference>
<dbReference type="RefSeq" id="NP_194809.1">
    <property type="nucleotide sequence ID" value="NM_119226.4"/>
</dbReference>
<dbReference type="SMR" id="O65569"/>
<dbReference type="BioGRID" id="14490">
    <property type="interactions" value="171"/>
</dbReference>
<dbReference type="FunCoup" id="O65569">
    <property type="interactions" value="3358"/>
</dbReference>
<dbReference type="STRING" id="3702.O65569"/>
<dbReference type="iPTMnet" id="O65569"/>
<dbReference type="PaxDb" id="3702-AT4G30800.1"/>
<dbReference type="ProteomicsDB" id="226514"/>
<dbReference type="EnsemblPlants" id="AT4G30800.1">
    <property type="protein sequence ID" value="AT4G30800.1"/>
    <property type="gene ID" value="AT4G30800"/>
</dbReference>
<dbReference type="GeneID" id="829203"/>
<dbReference type="Gramene" id="AT4G30800.1">
    <property type="protein sequence ID" value="AT4G30800.1"/>
    <property type="gene ID" value="AT4G30800"/>
</dbReference>
<dbReference type="KEGG" id="ath:AT4G30800"/>
<dbReference type="Araport" id="AT4G30800"/>
<dbReference type="TAIR" id="AT4G30800"/>
<dbReference type="eggNOG" id="KOG1728">
    <property type="taxonomic scope" value="Eukaryota"/>
</dbReference>
<dbReference type="HOGENOM" id="CLU_073626_0_2_1"/>
<dbReference type="InParanoid" id="O65569"/>
<dbReference type="OMA" id="TECLTIF"/>
<dbReference type="OrthoDB" id="1890621at2759"/>
<dbReference type="PhylomeDB" id="O65569"/>
<dbReference type="PRO" id="PR:O65569"/>
<dbReference type="Proteomes" id="UP000006548">
    <property type="component" value="Chromosome 4"/>
</dbReference>
<dbReference type="ExpressionAtlas" id="O65569">
    <property type="expression patterns" value="baseline and differential"/>
</dbReference>
<dbReference type="GO" id="GO:0022627">
    <property type="term" value="C:cytosolic small ribosomal subunit"/>
    <property type="evidence" value="ECO:0007005"/>
    <property type="project" value="TAIR"/>
</dbReference>
<dbReference type="GO" id="GO:0005886">
    <property type="term" value="C:plasma membrane"/>
    <property type="evidence" value="ECO:0007005"/>
    <property type="project" value="TAIR"/>
</dbReference>
<dbReference type="GO" id="GO:0003729">
    <property type="term" value="F:mRNA binding"/>
    <property type="evidence" value="ECO:0000314"/>
    <property type="project" value="TAIR"/>
</dbReference>
<dbReference type="GO" id="GO:0019843">
    <property type="term" value="F:rRNA binding"/>
    <property type="evidence" value="ECO:0007669"/>
    <property type="project" value="UniProtKB-KW"/>
</dbReference>
<dbReference type="GO" id="GO:0003735">
    <property type="term" value="F:structural constituent of ribosome"/>
    <property type="evidence" value="ECO:0000314"/>
    <property type="project" value="CAFA"/>
</dbReference>
<dbReference type="GO" id="GO:0006412">
    <property type="term" value="P:translation"/>
    <property type="evidence" value="ECO:0007669"/>
    <property type="project" value="InterPro"/>
</dbReference>
<dbReference type="CDD" id="cd00364">
    <property type="entry name" value="Ribosomal_uS17"/>
    <property type="match status" value="1"/>
</dbReference>
<dbReference type="FunFam" id="2.40.50.1000:FF:000003">
    <property type="entry name" value="40S ribosomal protein S11"/>
    <property type="match status" value="1"/>
</dbReference>
<dbReference type="Gene3D" id="2.40.50.1000">
    <property type="match status" value="1"/>
</dbReference>
<dbReference type="InterPro" id="IPR012340">
    <property type="entry name" value="NA-bd_OB-fold"/>
</dbReference>
<dbReference type="InterPro" id="IPR000266">
    <property type="entry name" value="Ribosomal_uS17"/>
</dbReference>
<dbReference type="InterPro" id="IPR028333">
    <property type="entry name" value="Ribosomal_uS17_arc/euk"/>
</dbReference>
<dbReference type="InterPro" id="IPR019979">
    <property type="entry name" value="Ribosomal_uS17_CS"/>
</dbReference>
<dbReference type="InterPro" id="IPR032440">
    <property type="entry name" value="Ribosomal_uS17_N"/>
</dbReference>
<dbReference type="NCBIfam" id="NF006345">
    <property type="entry name" value="PRK08572.1"/>
    <property type="match status" value="1"/>
</dbReference>
<dbReference type="NCBIfam" id="TIGR03630">
    <property type="entry name" value="uS17_arch"/>
    <property type="match status" value="1"/>
</dbReference>
<dbReference type="PANTHER" id="PTHR10744">
    <property type="entry name" value="40S RIBOSOMAL PROTEIN S11 FAMILY MEMBER"/>
    <property type="match status" value="1"/>
</dbReference>
<dbReference type="PANTHER" id="PTHR10744:SF47">
    <property type="entry name" value="SMALL RIBOSOMAL SUBUNIT PROTEIN US17X-RELATED"/>
    <property type="match status" value="1"/>
</dbReference>
<dbReference type="Pfam" id="PF00366">
    <property type="entry name" value="Ribosomal_S17"/>
    <property type="match status" value="1"/>
</dbReference>
<dbReference type="Pfam" id="PF16205">
    <property type="entry name" value="Ribosomal_S17_N"/>
    <property type="match status" value="1"/>
</dbReference>
<dbReference type="PRINTS" id="PR00973">
    <property type="entry name" value="RIBOSOMALS17"/>
</dbReference>
<dbReference type="SUPFAM" id="SSF50249">
    <property type="entry name" value="Nucleic acid-binding proteins"/>
    <property type="match status" value="1"/>
</dbReference>
<dbReference type="PROSITE" id="PS00056">
    <property type="entry name" value="RIBOSOMAL_S17"/>
    <property type="match status" value="1"/>
</dbReference>